<protein>
    <recommendedName>
        <fullName evidence="1">Ribosomal RNA small subunit methyltransferase A</fullName>
        <ecNumber evidence="1">2.1.1.182</ecNumber>
    </recommendedName>
    <alternativeName>
        <fullName evidence="1">16S rRNA (adenine(1518)-N(6)/adenine(1519)-N(6))-dimethyltransferase</fullName>
    </alternativeName>
    <alternativeName>
        <fullName evidence="1">16S rRNA dimethyladenosine transferase</fullName>
    </alternativeName>
    <alternativeName>
        <fullName evidence="1">16S rRNA dimethylase</fullName>
    </alternativeName>
    <alternativeName>
        <fullName evidence="1">S-adenosylmethionine-6-N', N'-adenosyl(rRNA) dimethyltransferase</fullName>
    </alternativeName>
</protein>
<gene>
    <name evidence="1" type="primary">rsmA</name>
    <name evidence="1" type="synonym">ksgA</name>
    <name type="ordered locus">Ent638_0600</name>
</gene>
<dbReference type="EC" id="2.1.1.182" evidence="1"/>
<dbReference type="EMBL" id="CP000653">
    <property type="protein sequence ID" value="ABP59287.1"/>
    <property type="molecule type" value="Genomic_DNA"/>
</dbReference>
<dbReference type="RefSeq" id="WP_012016009.1">
    <property type="nucleotide sequence ID" value="NC_009436.1"/>
</dbReference>
<dbReference type="SMR" id="A4W6F7"/>
<dbReference type="STRING" id="399742.Ent638_0600"/>
<dbReference type="GeneID" id="93307774"/>
<dbReference type="KEGG" id="ent:Ent638_0600"/>
<dbReference type="eggNOG" id="COG0030">
    <property type="taxonomic scope" value="Bacteria"/>
</dbReference>
<dbReference type="HOGENOM" id="CLU_041220_0_1_6"/>
<dbReference type="OrthoDB" id="9814755at2"/>
<dbReference type="Proteomes" id="UP000000230">
    <property type="component" value="Chromosome"/>
</dbReference>
<dbReference type="GO" id="GO:0005829">
    <property type="term" value="C:cytosol"/>
    <property type="evidence" value="ECO:0007669"/>
    <property type="project" value="TreeGrafter"/>
</dbReference>
<dbReference type="GO" id="GO:0052908">
    <property type="term" value="F:16S rRNA (adenine(1518)-N(6)/adenine(1519)-N(6))-dimethyltransferase activity"/>
    <property type="evidence" value="ECO:0007669"/>
    <property type="project" value="UniProtKB-EC"/>
</dbReference>
<dbReference type="GO" id="GO:0003723">
    <property type="term" value="F:RNA binding"/>
    <property type="evidence" value="ECO:0007669"/>
    <property type="project" value="UniProtKB-KW"/>
</dbReference>
<dbReference type="FunFam" id="1.10.8.100:FF:000001">
    <property type="entry name" value="Ribosomal RNA small subunit methyltransferase A"/>
    <property type="match status" value="1"/>
</dbReference>
<dbReference type="FunFam" id="3.40.50.150:FF:000006">
    <property type="entry name" value="Ribosomal RNA small subunit methyltransferase A"/>
    <property type="match status" value="1"/>
</dbReference>
<dbReference type="Gene3D" id="1.10.8.100">
    <property type="entry name" value="Ribosomal RNA adenine dimethylase-like, domain 2"/>
    <property type="match status" value="1"/>
</dbReference>
<dbReference type="Gene3D" id="3.40.50.150">
    <property type="entry name" value="Vaccinia Virus protein VP39"/>
    <property type="match status" value="1"/>
</dbReference>
<dbReference type="HAMAP" id="MF_00607">
    <property type="entry name" value="16SrRNA_methyltr_A"/>
    <property type="match status" value="1"/>
</dbReference>
<dbReference type="InterPro" id="IPR001737">
    <property type="entry name" value="KsgA/Erm"/>
</dbReference>
<dbReference type="InterPro" id="IPR023165">
    <property type="entry name" value="rRNA_Ade_diMease-like_C"/>
</dbReference>
<dbReference type="InterPro" id="IPR020596">
    <property type="entry name" value="rRNA_Ade_Mease_Trfase_CS"/>
</dbReference>
<dbReference type="InterPro" id="IPR020598">
    <property type="entry name" value="rRNA_Ade_methylase_Trfase_N"/>
</dbReference>
<dbReference type="InterPro" id="IPR011530">
    <property type="entry name" value="rRNA_adenine_dimethylase"/>
</dbReference>
<dbReference type="InterPro" id="IPR029063">
    <property type="entry name" value="SAM-dependent_MTases_sf"/>
</dbReference>
<dbReference type="NCBIfam" id="TIGR00755">
    <property type="entry name" value="ksgA"/>
    <property type="match status" value="1"/>
</dbReference>
<dbReference type="PANTHER" id="PTHR11727">
    <property type="entry name" value="DIMETHYLADENOSINE TRANSFERASE"/>
    <property type="match status" value="1"/>
</dbReference>
<dbReference type="PANTHER" id="PTHR11727:SF7">
    <property type="entry name" value="DIMETHYLADENOSINE TRANSFERASE-RELATED"/>
    <property type="match status" value="1"/>
</dbReference>
<dbReference type="Pfam" id="PF00398">
    <property type="entry name" value="RrnaAD"/>
    <property type="match status" value="1"/>
</dbReference>
<dbReference type="SMART" id="SM00650">
    <property type="entry name" value="rADc"/>
    <property type="match status" value="1"/>
</dbReference>
<dbReference type="SUPFAM" id="SSF53335">
    <property type="entry name" value="S-adenosyl-L-methionine-dependent methyltransferases"/>
    <property type="match status" value="1"/>
</dbReference>
<dbReference type="PROSITE" id="PS01131">
    <property type="entry name" value="RRNA_A_DIMETH"/>
    <property type="match status" value="1"/>
</dbReference>
<dbReference type="PROSITE" id="PS51689">
    <property type="entry name" value="SAM_RNA_A_N6_MT"/>
    <property type="match status" value="1"/>
</dbReference>
<evidence type="ECO:0000255" key="1">
    <source>
        <dbReference type="HAMAP-Rule" id="MF_00607"/>
    </source>
</evidence>
<reference key="1">
    <citation type="journal article" date="2010" name="PLoS Genet.">
        <title>Genome sequence of the plant growth promoting endophytic bacterium Enterobacter sp. 638.</title>
        <authorList>
            <person name="Taghavi S."/>
            <person name="van der Lelie D."/>
            <person name="Hoffman A."/>
            <person name="Zhang Y.B."/>
            <person name="Walla M.D."/>
            <person name="Vangronsveld J."/>
            <person name="Newman L."/>
            <person name="Monchy S."/>
        </authorList>
    </citation>
    <scope>NUCLEOTIDE SEQUENCE [LARGE SCALE GENOMIC DNA]</scope>
    <source>
        <strain>638</strain>
    </source>
</reference>
<organism>
    <name type="scientific">Enterobacter sp. (strain 638)</name>
    <dbReference type="NCBI Taxonomy" id="399742"/>
    <lineage>
        <taxon>Bacteria</taxon>
        <taxon>Pseudomonadati</taxon>
        <taxon>Pseudomonadota</taxon>
        <taxon>Gammaproteobacteria</taxon>
        <taxon>Enterobacterales</taxon>
        <taxon>Enterobacteriaceae</taxon>
        <taxon>Enterobacter</taxon>
    </lineage>
</organism>
<name>RSMA_ENT38</name>
<feature type="chain" id="PRO_1000061284" description="Ribosomal RNA small subunit methyltransferase A">
    <location>
        <begin position="1"/>
        <end position="273"/>
    </location>
</feature>
<feature type="binding site" evidence="1">
    <location>
        <position position="18"/>
    </location>
    <ligand>
        <name>S-adenosyl-L-methionine</name>
        <dbReference type="ChEBI" id="CHEBI:59789"/>
    </ligand>
</feature>
<feature type="binding site" evidence="1">
    <location>
        <position position="20"/>
    </location>
    <ligand>
        <name>S-adenosyl-L-methionine</name>
        <dbReference type="ChEBI" id="CHEBI:59789"/>
    </ligand>
</feature>
<feature type="binding site" evidence="1">
    <location>
        <position position="45"/>
    </location>
    <ligand>
        <name>S-adenosyl-L-methionine</name>
        <dbReference type="ChEBI" id="CHEBI:59789"/>
    </ligand>
</feature>
<feature type="binding site" evidence="1">
    <location>
        <position position="66"/>
    </location>
    <ligand>
        <name>S-adenosyl-L-methionine</name>
        <dbReference type="ChEBI" id="CHEBI:59789"/>
    </ligand>
</feature>
<feature type="binding site" evidence="1">
    <location>
        <position position="91"/>
    </location>
    <ligand>
        <name>S-adenosyl-L-methionine</name>
        <dbReference type="ChEBI" id="CHEBI:59789"/>
    </ligand>
</feature>
<feature type="binding site" evidence="1">
    <location>
        <position position="113"/>
    </location>
    <ligand>
        <name>S-adenosyl-L-methionine</name>
        <dbReference type="ChEBI" id="CHEBI:59789"/>
    </ligand>
</feature>
<proteinExistence type="inferred from homology"/>
<accession>A4W6F7</accession>
<sequence>MNTRVHQGHLARKRFGQNFLNDQFVIESIVSAINPQKGQAMVEIGPGLAALTEPVGERLDEMTVIELDRDLAARLKTHPFLGPKLTIYQQDAMTMNFAELSEKLGQPLRVFGNLPYNISTPLMFHLFSYTDAIADMHFMLQKEVVNRLVAGPNSKAYGRLSVMAQYYCQIIPVLEVPPTAFTPAPKVESAVVRLVPHAVMPHPVKELRVLSRITTEAFNQRRKTIRNSLGNTFTVDVLTELGIDPAMRAENISVEQYCKLANYISDNAPPKES</sequence>
<keyword id="KW-0963">Cytoplasm</keyword>
<keyword id="KW-0489">Methyltransferase</keyword>
<keyword id="KW-0694">RNA-binding</keyword>
<keyword id="KW-0698">rRNA processing</keyword>
<keyword id="KW-0949">S-adenosyl-L-methionine</keyword>
<keyword id="KW-0808">Transferase</keyword>
<comment type="function">
    <text evidence="1">Specifically dimethylates two adjacent adenosines (A1518 and A1519) in the loop of a conserved hairpin near the 3'-end of 16S rRNA in the 30S particle. May play a critical role in biogenesis of 30S subunits.</text>
</comment>
<comment type="catalytic activity">
    <reaction evidence="1">
        <text>adenosine(1518)/adenosine(1519) in 16S rRNA + 4 S-adenosyl-L-methionine = N(6)-dimethyladenosine(1518)/N(6)-dimethyladenosine(1519) in 16S rRNA + 4 S-adenosyl-L-homocysteine + 4 H(+)</text>
        <dbReference type="Rhea" id="RHEA:19609"/>
        <dbReference type="Rhea" id="RHEA-COMP:10232"/>
        <dbReference type="Rhea" id="RHEA-COMP:10233"/>
        <dbReference type="ChEBI" id="CHEBI:15378"/>
        <dbReference type="ChEBI" id="CHEBI:57856"/>
        <dbReference type="ChEBI" id="CHEBI:59789"/>
        <dbReference type="ChEBI" id="CHEBI:74411"/>
        <dbReference type="ChEBI" id="CHEBI:74493"/>
        <dbReference type="EC" id="2.1.1.182"/>
    </reaction>
</comment>
<comment type="subcellular location">
    <subcellularLocation>
        <location evidence="1">Cytoplasm</location>
    </subcellularLocation>
</comment>
<comment type="similarity">
    <text evidence="1">Belongs to the class I-like SAM-binding methyltransferase superfamily. rRNA adenine N(6)-methyltransferase family. RsmA subfamily.</text>
</comment>